<organism>
    <name type="scientific">Paulinella chromatophora</name>
    <dbReference type="NCBI Taxonomy" id="39717"/>
    <lineage>
        <taxon>Eukaryota</taxon>
        <taxon>Sar</taxon>
        <taxon>Rhizaria</taxon>
        <taxon>Cercozoa</taxon>
        <taxon>Imbricatea</taxon>
        <taxon>Silicofilosea</taxon>
        <taxon>Euglyphida</taxon>
        <taxon>Paulinellidae</taxon>
        <taxon>Paulinella</taxon>
    </lineage>
</organism>
<comment type="subcellular location">
    <subcellularLocation>
        <location>Plastid</location>
        <location>Organellar chromatophore</location>
    </subcellularLocation>
</comment>
<comment type="similarity">
    <text evidence="1">Belongs to the universal ribosomal protein uS2 family.</text>
</comment>
<feature type="chain" id="PRO_0000352166" description="Small ribosomal subunit protein uS2c">
    <location>
        <begin position="1"/>
        <end position="239"/>
    </location>
</feature>
<geneLocation type="organellar chromatophore"/>
<protein>
    <recommendedName>
        <fullName evidence="1">Small ribosomal subunit protein uS2c</fullName>
    </recommendedName>
    <alternativeName>
        <fullName>30S ribosomal protein S2, organellar chromatophore</fullName>
    </alternativeName>
</protein>
<keyword id="KW-0994">Organellar chromatophore</keyword>
<keyword id="KW-0934">Plastid</keyword>
<keyword id="KW-0687">Ribonucleoprotein</keyword>
<keyword id="KW-0689">Ribosomal protein</keyword>
<proteinExistence type="inferred from homology"/>
<name>RR2_PAUCH</name>
<dbReference type="EMBL" id="CP000815">
    <property type="protein sequence ID" value="ACB42706.1"/>
    <property type="molecule type" value="Genomic_DNA"/>
</dbReference>
<dbReference type="RefSeq" id="YP_002048916.1">
    <property type="nucleotide sequence ID" value="NC_011087.1"/>
</dbReference>
<dbReference type="SMR" id="B1X437"/>
<dbReference type="GeneID" id="6481354"/>
<dbReference type="GO" id="GO:0022627">
    <property type="term" value="C:cytosolic small ribosomal subunit"/>
    <property type="evidence" value="ECO:0007669"/>
    <property type="project" value="TreeGrafter"/>
</dbReference>
<dbReference type="GO" id="GO:0070111">
    <property type="term" value="C:organellar chromatophore"/>
    <property type="evidence" value="ECO:0007669"/>
    <property type="project" value="UniProtKB-SubCell"/>
</dbReference>
<dbReference type="GO" id="GO:0009536">
    <property type="term" value="C:plastid"/>
    <property type="evidence" value="ECO:0007669"/>
    <property type="project" value="UniProtKB-KW"/>
</dbReference>
<dbReference type="GO" id="GO:0003735">
    <property type="term" value="F:structural constituent of ribosome"/>
    <property type="evidence" value="ECO:0007669"/>
    <property type="project" value="InterPro"/>
</dbReference>
<dbReference type="GO" id="GO:0006412">
    <property type="term" value="P:translation"/>
    <property type="evidence" value="ECO:0007669"/>
    <property type="project" value="InterPro"/>
</dbReference>
<dbReference type="CDD" id="cd01425">
    <property type="entry name" value="RPS2"/>
    <property type="match status" value="1"/>
</dbReference>
<dbReference type="FunFam" id="1.10.287.610:FF:000001">
    <property type="entry name" value="30S ribosomal protein S2"/>
    <property type="match status" value="1"/>
</dbReference>
<dbReference type="Gene3D" id="3.40.50.10490">
    <property type="entry name" value="Glucose-6-phosphate isomerase like protein, domain 1"/>
    <property type="match status" value="1"/>
</dbReference>
<dbReference type="Gene3D" id="1.10.287.610">
    <property type="entry name" value="Helix hairpin bin"/>
    <property type="match status" value="1"/>
</dbReference>
<dbReference type="HAMAP" id="MF_00291_B">
    <property type="entry name" value="Ribosomal_uS2_B"/>
    <property type="match status" value="1"/>
</dbReference>
<dbReference type="InterPro" id="IPR001865">
    <property type="entry name" value="Ribosomal_uS2"/>
</dbReference>
<dbReference type="InterPro" id="IPR005706">
    <property type="entry name" value="Ribosomal_uS2_bac/mit/plastid"/>
</dbReference>
<dbReference type="InterPro" id="IPR018130">
    <property type="entry name" value="Ribosomal_uS2_CS"/>
</dbReference>
<dbReference type="InterPro" id="IPR023591">
    <property type="entry name" value="Ribosomal_uS2_flav_dom_sf"/>
</dbReference>
<dbReference type="NCBIfam" id="TIGR01011">
    <property type="entry name" value="rpsB_bact"/>
    <property type="match status" value="1"/>
</dbReference>
<dbReference type="PANTHER" id="PTHR12534">
    <property type="entry name" value="30S RIBOSOMAL PROTEIN S2 PROKARYOTIC AND ORGANELLAR"/>
    <property type="match status" value="1"/>
</dbReference>
<dbReference type="PANTHER" id="PTHR12534:SF0">
    <property type="entry name" value="SMALL RIBOSOMAL SUBUNIT PROTEIN US2M"/>
    <property type="match status" value="1"/>
</dbReference>
<dbReference type="Pfam" id="PF00318">
    <property type="entry name" value="Ribosomal_S2"/>
    <property type="match status" value="1"/>
</dbReference>
<dbReference type="PRINTS" id="PR00395">
    <property type="entry name" value="RIBOSOMALS2"/>
</dbReference>
<dbReference type="SUPFAM" id="SSF52313">
    <property type="entry name" value="Ribosomal protein S2"/>
    <property type="match status" value="1"/>
</dbReference>
<dbReference type="PROSITE" id="PS00962">
    <property type="entry name" value="RIBOSOMAL_S2_1"/>
    <property type="match status" value="1"/>
</dbReference>
<evidence type="ECO:0000305" key="1"/>
<accession>B1X437</accession>
<gene>
    <name type="primary">rps2</name>
    <name type="ordered locus">PCC_0257</name>
</gene>
<sequence>MAVVTLAEMMEAGAHFGHQTRRWNPKMSRYIYCARNGVHIIDLVQTAICMNNAYKWTRSAARSGKRFLFVGTKKQASEVIAQEAARCGAAYVNQRWLGGMLTNWTTMRARIDRLKDLERMEGSGSIAMRPKKEAAVLRRELDRLRKYLGGLKNMRRLPDVVILVDQRRETNAVLECRKLDIPLVSMLDTNCDPDLCDVPIPCNDDAVRSVQLVLSRLSDAINEGRHGVQDQRGNDDSEG</sequence>
<reference key="1">
    <citation type="journal article" date="2008" name="Curr. Biol.">
        <title>Chromatophore genome sequence of Paulinella sheds light on acquisition of photosynthesis by eukaryotes.</title>
        <authorList>
            <person name="Nowack E.C.M."/>
            <person name="Melkonian M."/>
            <person name="Gloeckner G."/>
        </authorList>
    </citation>
    <scope>NUCLEOTIDE SEQUENCE [LARGE SCALE GENOMIC DNA]</scope>
</reference>